<name>RPOA_STRGG</name>
<sequence length="340" mass="36696">MLIAQRPSLTEEVVDEFRSRFVIEPLEPGFGYTLGNSLRRTLLSSIPGAAVTSIRIDGVLHEFTTVPGVKEDVTDLILNIKQLVVSSEHDEPVVMYLRKQGPGLVTAADIAPPAGVEVHNPDLVLATLNGKGKLEMELTVERGRGYVSAVQNKQVGQEIGRIPVDSIYSPVLKVTYKVEATRVEQRTDFDKLIVDVETKQAMRPRDAMASAGKTLVELFGLARELNIDAEGIDMGPSPTDAALAADLALPIEELELTVRSYNCLKREGIHSVGELVARSEADLLDIRNFGAKSIDEVKAKLAGMGLALKDSPPGFDPTAAADAFGADDDADAGFVETEQY</sequence>
<accession>B1W3Y0</accession>
<organism>
    <name type="scientific">Streptomyces griseus subsp. griseus (strain JCM 4626 / CBS 651.72 / NBRC 13350 / KCC S-0626 / ISP 5235)</name>
    <dbReference type="NCBI Taxonomy" id="455632"/>
    <lineage>
        <taxon>Bacteria</taxon>
        <taxon>Bacillati</taxon>
        <taxon>Actinomycetota</taxon>
        <taxon>Actinomycetes</taxon>
        <taxon>Kitasatosporales</taxon>
        <taxon>Streptomycetaceae</taxon>
        <taxon>Streptomyces</taxon>
    </lineage>
</organism>
<protein>
    <recommendedName>
        <fullName evidence="1">DNA-directed RNA polymerase subunit alpha</fullName>
        <shortName evidence="1">RNAP subunit alpha</shortName>
        <ecNumber evidence="1">2.7.7.6</ecNumber>
    </recommendedName>
    <alternativeName>
        <fullName evidence="1">RNA polymerase subunit alpha</fullName>
    </alternativeName>
    <alternativeName>
        <fullName evidence="1">Transcriptase subunit alpha</fullName>
    </alternativeName>
</protein>
<proteinExistence type="inferred from homology"/>
<dbReference type="EC" id="2.7.7.6" evidence="1"/>
<dbReference type="EMBL" id="AP009493">
    <property type="protein sequence ID" value="BAG19636.1"/>
    <property type="molecule type" value="Genomic_DNA"/>
</dbReference>
<dbReference type="RefSeq" id="WP_003966937.1">
    <property type="nucleotide sequence ID" value="NC_010572.1"/>
</dbReference>
<dbReference type="SMR" id="B1W3Y0"/>
<dbReference type="KEGG" id="sgr:SGR_2807"/>
<dbReference type="eggNOG" id="COG0202">
    <property type="taxonomic scope" value="Bacteria"/>
</dbReference>
<dbReference type="HOGENOM" id="CLU_053084_0_1_11"/>
<dbReference type="Proteomes" id="UP000001685">
    <property type="component" value="Chromosome"/>
</dbReference>
<dbReference type="GO" id="GO:0005737">
    <property type="term" value="C:cytoplasm"/>
    <property type="evidence" value="ECO:0007669"/>
    <property type="project" value="UniProtKB-ARBA"/>
</dbReference>
<dbReference type="GO" id="GO:0000428">
    <property type="term" value="C:DNA-directed RNA polymerase complex"/>
    <property type="evidence" value="ECO:0007669"/>
    <property type="project" value="UniProtKB-KW"/>
</dbReference>
<dbReference type="GO" id="GO:0003677">
    <property type="term" value="F:DNA binding"/>
    <property type="evidence" value="ECO:0007669"/>
    <property type="project" value="UniProtKB-UniRule"/>
</dbReference>
<dbReference type="GO" id="GO:0003899">
    <property type="term" value="F:DNA-directed RNA polymerase activity"/>
    <property type="evidence" value="ECO:0007669"/>
    <property type="project" value="UniProtKB-UniRule"/>
</dbReference>
<dbReference type="GO" id="GO:0046983">
    <property type="term" value="F:protein dimerization activity"/>
    <property type="evidence" value="ECO:0007669"/>
    <property type="project" value="InterPro"/>
</dbReference>
<dbReference type="GO" id="GO:0006351">
    <property type="term" value="P:DNA-templated transcription"/>
    <property type="evidence" value="ECO:0007669"/>
    <property type="project" value="UniProtKB-UniRule"/>
</dbReference>
<dbReference type="CDD" id="cd06928">
    <property type="entry name" value="RNAP_alpha_NTD"/>
    <property type="match status" value="1"/>
</dbReference>
<dbReference type="FunFam" id="1.10.150.20:FF:000001">
    <property type="entry name" value="DNA-directed RNA polymerase subunit alpha"/>
    <property type="match status" value="1"/>
</dbReference>
<dbReference type="FunFam" id="2.170.120.12:FF:000001">
    <property type="entry name" value="DNA-directed RNA polymerase subunit alpha"/>
    <property type="match status" value="1"/>
</dbReference>
<dbReference type="Gene3D" id="1.10.150.20">
    <property type="entry name" value="5' to 3' exonuclease, C-terminal subdomain"/>
    <property type="match status" value="1"/>
</dbReference>
<dbReference type="Gene3D" id="2.170.120.12">
    <property type="entry name" value="DNA-directed RNA polymerase, insert domain"/>
    <property type="match status" value="1"/>
</dbReference>
<dbReference type="Gene3D" id="3.30.1360.10">
    <property type="entry name" value="RNA polymerase, RBP11-like subunit"/>
    <property type="match status" value="1"/>
</dbReference>
<dbReference type="HAMAP" id="MF_00059">
    <property type="entry name" value="RNApol_bact_RpoA"/>
    <property type="match status" value="1"/>
</dbReference>
<dbReference type="InterPro" id="IPR011262">
    <property type="entry name" value="DNA-dir_RNA_pol_insert"/>
</dbReference>
<dbReference type="InterPro" id="IPR011263">
    <property type="entry name" value="DNA-dir_RNA_pol_RpoA/D/Rpb3"/>
</dbReference>
<dbReference type="InterPro" id="IPR011773">
    <property type="entry name" value="DNA-dir_RpoA"/>
</dbReference>
<dbReference type="InterPro" id="IPR036603">
    <property type="entry name" value="RBP11-like"/>
</dbReference>
<dbReference type="InterPro" id="IPR011260">
    <property type="entry name" value="RNAP_asu_C"/>
</dbReference>
<dbReference type="InterPro" id="IPR036643">
    <property type="entry name" value="RNApol_insert_sf"/>
</dbReference>
<dbReference type="NCBIfam" id="NF003513">
    <property type="entry name" value="PRK05182.1-2"/>
    <property type="match status" value="1"/>
</dbReference>
<dbReference type="NCBIfam" id="NF003514">
    <property type="entry name" value="PRK05182.1-4"/>
    <property type="match status" value="1"/>
</dbReference>
<dbReference type="NCBIfam" id="NF003519">
    <property type="entry name" value="PRK05182.2-5"/>
    <property type="match status" value="1"/>
</dbReference>
<dbReference type="NCBIfam" id="TIGR02027">
    <property type="entry name" value="rpoA"/>
    <property type="match status" value="1"/>
</dbReference>
<dbReference type="Pfam" id="PF01000">
    <property type="entry name" value="RNA_pol_A_bac"/>
    <property type="match status" value="1"/>
</dbReference>
<dbReference type="Pfam" id="PF03118">
    <property type="entry name" value="RNA_pol_A_CTD"/>
    <property type="match status" value="1"/>
</dbReference>
<dbReference type="Pfam" id="PF01193">
    <property type="entry name" value="RNA_pol_L"/>
    <property type="match status" value="1"/>
</dbReference>
<dbReference type="SMART" id="SM00662">
    <property type="entry name" value="RPOLD"/>
    <property type="match status" value="1"/>
</dbReference>
<dbReference type="SUPFAM" id="SSF47789">
    <property type="entry name" value="C-terminal domain of RNA polymerase alpha subunit"/>
    <property type="match status" value="1"/>
</dbReference>
<dbReference type="SUPFAM" id="SSF56553">
    <property type="entry name" value="Insert subdomain of RNA polymerase alpha subunit"/>
    <property type="match status" value="1"/>
</dbReference>
<dbReference type="SUPFAM" id="SSF55257">
    <property type="entry name" value="RBP11-like subunits of RNA polymerase"/>
    <property type="match status" value="1"/>
</dbReference>
<keyword id="KW-0240">DNA-directed RNA polymerase</keyword>
<keyword id="KW-0548">Nucleotidyltransferase</keyword>
<keyword id="KW-0804">Transcription</keyword>
<keyword id="KW-0808">Transferase</keyword>
<evidence type="ECO:0000255" key="1">
    <source>
        <dbReference type="HAMAP-Rule" id="MF_00059"/>
    </source>
</evidence>
<reference key="1">
    <citation type="journal article" date="2008" name="J. Bacteriol.">
        <title>Genome sequence of the streptomycin-producing microorganism Streptomyces griseus IFO 13350.</title>
        <authorList>
            <person name="Ohnishi Y."/>
            <person name="Ishikawa J."/>
            <person name="Hara H."/>
            <person name="Suzuki H."/>
            <person name="Ikenoya M."/>
            <person name="Ikeda H."/>
            <person name="Yamashita A."/>
            <person name="Hattori M."/>
            <person name="Horinouchi S."/>
        </authorList>
    </citation>
    <scope>NUCLEOTIDE SEQUENCE [LARGE SCALE GENOMIC DNA]</scope>
    <source>
        <strain>JCM 4626 / CBS 651.72 / NBRC 13350 / KCC S-0626 / ISP 5235</strain>
    </source>
</reference>
<comment type="function">
    <text evidence="1">DNA-dependent RNA polymerase catalyzes the transcription of DNA into RNA using the four ribonucleoside triphosphates as substrates.</text>
</comment>
<comment type="catalytic activity">
    <reaction evidence="1">
        <text>RNA(n) + a ribonucleoside 5'-triphosphate = RNA(n+1) + diphosphate</text>
        <dbReference type="Rhea" id="RHEA:21248"/>
        <dbReference type="Rhea" id="RHEA-COMP:14527"/>
        <dbReference type="Rhea" id="RHEA-COMP:17342"/>
        <dbReference type="ChEBI" id="CHEBI:33019"/>
        <dbReference type="ChEBI" id="CHEBI:61557"/>
        <dbReference type="ChEBI" id="CHEBI:140395"/>
        <dbReference type="EC" id="2.7.7.6"/>
    </reaction>
</comment>
<comment type="subunit">
    <text evidence="1">Homodimer. The RNAP catalytic core consists of 2 alpha, 1 beta, 1 beta' and 1 omega subunit. When a sigma factor is associated with the core the holoenzyme is formed, which can initiate transcription.</text>
</comment>
<comment type="domain">
    <text evidence="1">The N-terminal domain is essential for RNAP assembly and basal transcription, whereas the C-terminal domain is involved in interaction with transcriptional regulators and with upstream promoter elements.</text>
</comment>
<comment type="similarity">
    <text evidence="1">Belongs to the RNA polymerase alpha chain family.</text>
</comment>
<gene>
    <name evidence="1" type="primary">rpoA</name>
    <name type="ordered locus">SGR_2807</name>
</gene>
<feature type="chain" id="PRO_1000091968" description="DNA-directed RNA polymerase subunit alpha">
    <location>
        <begin position="1"/>
        <end position="340"/>
    </location>
</feature>
<feature type="region of interest" description="Alpha N-terminal domain (alpha-NTD)" evidence="1">
    <location>
        <begin position="1"/>
        <end position="226"/>
    </location>
</feature>
<feature type="region of interest" description="Alpha C-terminal domain (alpha-CTD)" evidence="1">
    <location>
        <begin position="243"/>
        <end position="340"/>
    </location>
</feature>